<accession>Q9A059</accession>
<accession>Q48Z78</accession>
<organism>
    <name type="scientific">Streptococcus pyogenes serotype M1</name>
    <dbReference type="NCBI Taxonomy" id="301447"/>
    <lineage>
        <taxon>Bacteria</taxon>
        <taxon>Bacillati</taxon>
        <taxon>Bacillota</taxon>
        <taxon>Bacilli</taxon>
        <taxon>Lactobacillales</taxon>
        <taxon>Streptococcaceae</taxon>
        <taxon>Streptococcus</taxon>
    </lineage>
</organism>
<proteinExistence type="inferred from homology"/>
<reference key="1">
    <citation type="journal article" date="2001" name="Proc. Natl. Acad. Sci. U.S.A.">
        <title>Complete genome sequence of an M1 strain of Streptococcus pyogenes.</title>
        <authorList>
            <person name="Ferretti J.J."/>
            <person name="McShan W.M."/>
            <person name="Ajdic D.J."/>
            <person name="Savic D.J."/>
            <person name="Savic G."/>
            <person name="Lyon K."/>
            <person name="Primeaux C."/>
            <person name="Sezate S."/>
            <person name="Suvorov A.N."/>
            <person name="Kenton S."/>
            <person name="Lai H.S."/>
            <person name="Lin S.P."/>
            <person name="Qian Y."/>
            <person name="Jia H.G."/>
            <person name="Najar F.Z."/>
            <person name="Ren Q."/>
            <person name="Zhu H."/>
            <person name="Song L."/>
            <person name="White J."/>
            <person name="Yuan X."/>
            <person name="Clifton S.W."/>
            <person name="Roe B.A."/>
            <person name="McLaughlin R.E."/>
        </authorList>
    </citation>
    <scope>NUCLEOTIDE SEQUENCE [LARGE SCALE GENOMIC DNA]</scope>
    <source>
        <strain>ATCC 700294 / SF370 / Serotype M1</strain>
    </source>
</reference>
<reference key="2">
    <citation type="journal article" date="2005" name="J. Infect. Dis.">
        <title>Evolutionary origin and emergence of a highly successful clone of serotype M1 group A Streptococcus involved multiple horizontal gene transfer events.</title>
        <authorList>
            <person name="Sumby P."/>
            <person name="Porcella S.F."/>
            <person name="Madrigal A.G."/>
            <person name="Barbian K.D."/>
            <person name="Virtaneva K."/>
            <person name="Ricklefs S.M."/>
            <person name="Sturdevant D.E."/>
            <person name="Graham M.R."/>
            <person name="Vuopio-Varkila J."/>
            <person name="Hoe N.P."/>
            <person name="Musser J.M."/>
        </authorList>
    </citation>
    <scope>NUCLEOTIDE SEQUENCE [LARGE SCALE GENOMIC DNA]</scope>
    <source>
        <strain>ATCC BAA-947 / MGAS5005 / Serotype M1</strain>
    </source>
</reference>
<comment type="function">
    <text evidence="1">Catalyzes the transfer of a dimethylallyl group onto the adenine at position 37 in tRNAs that read codons beginning with uridine, leading to the formation of N6-(dimethylallyl)adenosine (i(6)A).</text>
</comment>
<comment type="catalytic activity">
    <reaction evidence="1">
        <text>adenosine(37) in tRNA + dimethylallyl diphosphate = N(6)-dimethylallyladenosine(37) in tRNA + diphosphate</text>
        <dbReference type="Rhea" id="RHEA:26482"/>
        <dbReference type="Rhea" id="RHEA-COMP:10162"/>
        <dbReference type="Rhea" id="RHEA-COMP:10375"/>
        <dbReference type="ChEBI" id="CHEBI:33019"/>
        <dbReference type="ChEBI" id="CHEBI:57623"/>
        <dbReference type="ChEBI" id="CHEBI:74411"/>
        <dbReference type="ChEBI" id="CHEBI:74415"/>
        <dbReference type="EC" id="2.5.1.75"/>
    </reaction>
</comment>
<comment type="cofactor">
    <cofactor evidence="1">
        <name>Mg(2+)</name>
        <dbReference type="ChEBI" id="CHEBI:18420"/>
    </cofactor>
</comment>
<comment type="subunit">
    <text evidence="1">Monomer.</text>
</comment>
<comment type="similarity">
    <text evidence="1">Belongs to the IPP transferase family.</text>
</comment>
<protein>
    <recommendedName>
        <fullName evidence="1">tRNA dimethylallyltransferase</fullName>
        <ecNumber evidence="1">2.5.1.75</ecNumber>
    </recommendedName>
    <alternativeName>
        <fullName evidence="1">Dimethylallyl diphosphate:tRNA dimethylallyltransferase</fullName>
        <shortName evidence="1">DMAPP:tRNA dimethylallyltransferase</shortName>
        <shortName evidence="1">DMATase</shortName>
    </alternativeName>
    <alternativeName>
        <fullName evidence="1">Isopentenyl-diphosphate:tRNA isopentenyltransferase</fullName>
        <shortName evidence="1">IPP transferase</shortName>
        <shortName evidence="1">IPPT</shortName>
        <shortName evidence="1">IPTase</shortName>
    </alternativeName>
</protein>
<dbReference type="EC" id="2.5.1.75" evidence="1"/>
<dbReference type="EMBL" id="AE004092">
    <property type="protein sequence ID" value="AAK33836.1"/>
    <property type="molecule type" value="Genomic_DNA"/>
</dbReference>
<dbReference type="EMBL" id="CP000017">
    <property type="protein sequence ID" value="AAZ51340.1"/>
    <property type="molecule type" value="Genomic_DNA"/>
</dbReference>
<dbReference type="RefSeq" id="NP_269115.1">
    <property type="nucleotide sequence ID" value="NC_002737.2"/>
</dbReference>
<dbReference type="SMR" id="Q9A059"/>
<dbReference type="PaxDb" id="1314-HKU360_00734"/>
<dbReference type="KEGG" id="spy:SPy_0921"/>
<dbReference type="KEGG" id="spz:M5005_Spy0722"/>
<dbReference type="PATRIC" id="fig|160490.10.peg.792"/>
<dbReference type="HOGENOM" id="CLU_032616_0_1_9"/>
<dbReference type="OMA" id="VPHYLID"/>
<dbReference type="Proteomes" id="UP000000750">
    <property type="component" value="Chromosome"/>
</dbReference>
<dbReference type="GO" id="GO:0005524">
    <property type="term" value="F:ATP binding"/>
    <property type="evidence" value="ECO:0007669"/>
    <property type="project" value="UniProtKB-UniRule"/>
</dbReference>
<dbReference type="GO" id="GO:0052381">
    <property type="term" value="F:tRNA dimethylallyltransferase activity"/>
    <property type="evidence" value="ECO:0007669"/>
    <property type="project" value="UniProtKB-UniRule"/>
</dbReference>
<dbReference type="GO" id="GO:0006400">
    <property type="term" value="P:tRNA modification"/>
    <property type="evidence" value="ECO:0007669"/>
    <property type="project" value="TreeGrafter"/>
</dbReference>
<dbReference type="Gene3D" id="3.40.50.300">
    <property type="entry name" value="P-loop containing nucleotide triphosphate hydrolases"/>
    <property type="match status" value="1"/>
</dbReference>
<dbReference type="HAMAP" id="MF_00185">
    <property type="entry name" value="IPP_trans"/>
    <property type="match status" value="1"/>
</dbReference>
<dbReference type="InterPro" id="IPR039657">
    <property type="entry name" value="Dimethylallyltransferase"/>
</dbReference>
<dbReference type="InterPro" id="IPR018022">
    <property type="entry name" value="IPT"/>
</dbReference>
<dbReference type="InterPro" id="IPR027417">
    <property type="entry name" value="P-loop_NTPase"/>
</dbReference>
<dbReference type="NCBIfam" id="TIGR00174">
    <property type="entry name" value="miaA"/>
    <property type="match status" value="1"/>
</dbReference>
<dbReference type="PANTHER" id="PTHR11088">
    <property type="entry name" value="TRNA DIMETHYLALLYLTRANSFERASE"/>
    <property type="match status" value="1"/>
</dbReference>
<dbReference type="PANTHER" id="PTHR11088:SF60">
    <property type="entry name" value="TRNA DIMETHYLALLYLTRANSFERASE"/>
    <property type="match status" value="1"/>
</dbReference>
<dbReference type="Pfam" id="PF01715">
    <property type="entry name" value="IPPT"/>
    <property type="match status" value="1"/>
</dbReference>
<dbReference type="SUPFAM" id="SSF52540">
    <property type="entry name" value="P-loop containing nucleoside triphosphate hydrolases"/>
    <property type="match status" value="1"/>
</dbReference>
<evidence type="ECO:0000255" key="1">
    <source>
        <dbReference type="HAMAP-Rule" id="MF_00185"/>
    </source>
</evidence>
<gene>
    <name evidence="1" type="primary">miaA</name>
    <name type="ordered locus">SPy_0921</name>
    <name type="ordered locus">M5005_Spy0722</name>
</gene>
<keyword id="KW-0067">ATP-binding</keyword>
<keyword id="KW-0460">Magnesium</keyword>
<keyword id="KW-0547">Nucleotide-binding</keyword>
<keyword id="KW-1185">Reference proteome</keyword>
<keyword id="KW-0808">Transferase</keyword>
<keyword id="KW-0819">tRNA processing</keyword>
<name>MIAA_STRP1</name>
<feature type="chain" id="PRO_0000163987" description="tRNA dimethylallyltransferase">
    <location>
        <begin position="1"/>
        <end position="299"/>
    </location>
</feature>
<feature type="region of interest" description="Interaction with substrate tRNA" evidence="1">
    <location>
        <begin position="36"/>
        <end position="39"/>
    </location>
</feature>
<feature type="binding site" evidence="1">
    <location>
        <begin position="11"/>
        <end position="18"/>
    </location>
    <ligand>
        <name>ATP</name>
        <dbReference type="ChEBI" id="CHEBI:30616"/>
    </ligand>
</feature>
<feature type="binding site" evidence="1">
    <location>
        <begin position="13"/>
        <end position="18"/>
    </location>
    <ligand>
        <name>substrate</name>
    </ligand>
</feature>
<feature type="site" description="Interaction with substrate tRNA" evidence="1">
    <location>
        <position position="102"/>
    </location>
</feature>
<feature type="site" description="Interaction with substrate tRNA" evidence="1">
    <location>
        <position position="128"/>
    </location>
</feature>
<sequence length="299" mass="34008">MTKIKIVVIVGPTAVGKTALGISLAKAFNGEIISGDSQQVYRQLDIGTAKATQEEQEAAVHHLIDIREVTESYSAYDFVQDAQKSISDIVSRGKLPIIVGGTGLYLQSLLEGYHLGGQVDQEAVKAYRNELEQLDDHDLYERLQVNNITIEQVNRRRAIRALELAQFADELENAETAYEPLIIGLNDDRQVIYDRINQRVNRMIENGLLEEAKWLYEHYPTVQASRGIGYKELFPYFVGEMTLAEASDQLKQNTRRFAKRQLTWFRNRMAVSFTAITAPDYPQVVHDRVRDFLGQKEKS</sequence>